<name>XCP2_ARATH</name>
<feature type="signal peptide" evidence="5">
    <location>
        <begin position="1"/>
        <end position="26"/>
    </location>
</feature>
<feature type="propeptide" id="PRO_0000026469" description="Activation peptide" evidence="2">
    <location>
        <begin position="27"/>
        <end position="137"/>
    </location>
</feature>
<feature type="chain" id="PRO_0000026470" description="Cysteine protease XCP2">
    <location>
        <begin position="138"/>
        <end position="356"/>
    </location>
</feature>
<feature type="active site" evidence="7">
    <location>
        <position position="162"/>
    </location>
</feature>
<feature type="active site" evidence="8">
    <location>
        <position position="298"/>
    </location>
</feature>
<feature type="active site" evidence="9">
    <location>
        <position position="318"/>
    </location>
</feature>
<feature type="glycosylation site" description="N-linked (GlcNAc...) asparagine" evidence="6">
    <location>
        <position position="181"/>
    </location>
</feature>
<feature type="disulfide bond" evidence="4">
    <location>
        <begin position="159"/>
        <end position="201"/>
    </location>
</feature>
<feature type="disulfide bond" evidence="4">
    <location>
        <begin position="193"/>
        <end position="234"/>
    </location>
</feature>
<feature type="disulfide bond" evidence="4">
    <location>
        <begin position="292"/>
        <end position="343"/>
    </location>
</feature>
<comment type="function">
    <text evidence="12 13">Cysteine protease involved in xylem tracheary element (TE) autolysis during xylogenesis in roots. Participates in micro autolysis within the intact central vacuole before mega autolysis is initiated by tonoplast implosion (PubMed:18573193). Involved in susceptibility to the bacterial plant pathogen Ralstonia solanacearum (PubMed:24947605).</text>
</comment>
<comment type="subunit">
    <text evidence="13">Interacts with PRN2.</text>
</comment>
<comment type="subcellular location">
    <subcellularLocation>
        <location evidence="1">Vacuole</location>
    </subcellularLocation>
    <subcellularLocation>
        <location evidence="1">Cell membrane</location>
    </subcellularLocation>
    <text evidence="1">Predominantly vacuolar. May be associated to plasma membrane.</text>
</comment>
<comment type="tissue specificity">
    <text evidence="10 11">Mostly expressed in roots, stems and flowers. Confined to tracheary elements, and specifically to xylem.</text>
</comment>
<comment type="disruption phenotype">
    <text evidence="13">No visible phenotype under normal growth conditions, but mutant plants show increased resistance to infection by the bacterial wilt pathogen Ralstonia solanacearum.</text>
</comment>
<comment type="similarity">
    <text evidence="7 8 9">Belongs to the peptidase C1 family.</text>
</comment>
<protein>
    <recommendedName>
        <fullName evidence="15">Cysteine protease XCP2</fullName>
        <ecNumber evidence="3">3.4.22.-</ecNumber>
    </recommendedName>
    <alternativeName>
        <fullName evidence="14">Xylem cysteine peptidase 2</fullName>
        <shortName evidence="14">AtXCP2</shortName>
    </alternativeName>
</protein>
<gene>
    <name evidence="14" type="primary">XCP2</name>
    <name evidence="16" type="ordered locus">At1g20850</name>
    <name evidence="18" type="ORF">F2D10.37</name>
    <name evidence="17" type="ORF">F9H16.17</name>
</gene>
<proteinExistence type="evidence at protein level"/>
<reference key="1">
    <citation type="journal article" date="2000" name="Plant Physiol.">
        <title>Exploiting secondary growth in Arabidopsis. Construction of xylem and bark cDNA libraries and cloning of three xylem endopeptidases.</title>
        <authorList>
            <person name="Zhao C."/>
            <person name="Johnson B.J."/>
            <person name="Kositsup B."/>
            <person name="Beers E.P."/>
        </authorList>
    </citation>
    <scope>NUCLEOTIDE SEQUENCE [MRNA]</scope>
    <scope>TISSUE SPECIFICITY</scope>
    <source>
        <tissue>Xylem</tissue>
    </source>
</reference>
<reference key="2">
    <citation type="journal article" date="2000" name="Nature">
        <title>Sequence and analysis of chromosome 1 of the plant Arabidopsis thaliana.</title>
        <authorList>
            <person name="Theologis A."/>
            <person name="Ecker J.R."/>
            <person name="Palm C.J."/>
            <person name="Federspiel N.A."/>
            <person name="Kaul S."/>
            <person name="White O."/>
            <person name="Alonso J."/>
            <person name="Altafi H."/>
            <person name="Araujo R."/>
            <person name="Bowman C.L."/>
            <person name="Brooks S.Y."/>
            <person name="Buehler E."/>
            <person name="Chan A."/>
            <person name="Chao Q."/>
            <person name="Chen H."/>
            <person name="Cheuk R.F."/>
            <person name="Chin C.W."/>
            <person name="Chung M.K."/>
            <person name="Conn L."/>
            <person name="Conway A.B."/>
            <person name="Conway A.R."/>
            <person name="Creasy T.H."/>
            <person name="Dewar K."/>
            <person name="Dunn P."/>
            <person name="Etgu P."/>
            <person name="Feldblyum T.V."/>
            <person name="Feng J.-D."/>
            <person name="Fong B."/>
            <person name="Fujii C.Y."/>
            <person name="Gill J.E."/>
            <person name="Goldsmith A.D."/>
            <person name="Haas B."/>
            <person name="Hansen N.F."/>
            <person name="Hughes B."/>
            <person name="Huizar L."/>
            <person name="Hunter J.L."/>
            <person name="Jenkins J."/>
            <person name="Johnson-Hopson C."/>
            <person name="Khan S."/>
            <person name="Khaykin E."/>
            <person name="Kim C.J."/>
            <person name="Koo H.L."/>
            <person name="Kremenetskaia I."/>
            <person name="Kurtz D.B."/>
            <person name="Kwan A."/>
            <person name="Lam B."/>
            <person name="Langin-Hooper S."/>
            <person name="Lee A."/>
            <person name="Lee J.M."/>
            <person name="Lenz C.A."/>
            <person name="Li J.H."/>
            <person name="Li Y.-P."/>
            <person name="Lin X."/>
            <person name="Liu S.X."/>
            <person name="Liu Z.A."/>
            <person name="Luros J.S."/>
            <person name="Maiti R."/>
            <person name="Marziali A."/>
            <person name="Militscher J."/>
            <person name="Miranda M."/>
            <person name="Nguyen M."/>
            <person name="Nierman W.C."/>
            <person name="Osborne B.I."/>
            <person name="Pai G."/>
            <person name="Peterson J."/>
            <person name="Pham P.K."/>
            <person name="Rizzo M."/>
            <person name="Rooney T."/>
            <person name="Rowley D."/>
            <person name="Sakano H."/>
            <person name="Salzberg S.L."/>
            <person name="Schwartz J.R."/>
            <person name="Shinn P."/>
            <person name="Southwick A.M."/>
            <person name="Sun H."/>
            <person name="Tallon L.J."/>
            <person name="Tambunga G."/>
            <person name="Toriumi M.J."/>
            <person name="Town C.D."/>
            <person name="Utterback T."/>
            <person name="Van Aken S."/>
            <person name="Vaysberg M."/>
            <person name="Vysotskaia V.S."/>
            <person name="Walker M."/>
            <person name="Wu D."/>
            <person name="Yu G."/>
            <person name="Fraser C.M."/>
            <person name="Venter J.C."/>
            <person name="Davis R.W."/>
        </authorList>
    </citation>
    <scope>NUCLEOTIDE SEQUENCE [LARGE SCALE GENOMIC DNA]</scope>
    <source>
        <strain>cv. Columbia</strain>
    </source>
</reference>
<reference key="3">
    <citation type="journal article" date="2017" name="Plant J.">
        <title>Araport11: a complete reannotation of the Arabidopsis thaliana reference genome.</title>
        <authorList>
            <person name="Cheng C.Y."/>
            <person name="Krishnakumar V."/>
            <person name="Chan A.P."/>
            <person name="Thibaud-Nissen F."/>
            <person name="Schobel S."/>
            <person name="Town C.D."/>
        </authorList>
    </citation>
    <scope>GENOME REANNOTATION</scope>
    <source>
        <strain>cv. Columbia</strain>
    </source>
</reference>
<reference key="4">
    <citation type="journal article" date="2003" name="Science">
        <title>Empirical analysis of transcriptional activity in the Arabidopsis genome.</title>
        <authorList>
            <person name="Yamada K."/>
            <person name="Lim J."/>
            <person name="Dale J.M."/>
            <person name="Chen H."/>
            <person name="Shinn P."/>
            <person name="Palm C.J."/>
            <person name="Southwick A.M."/>
            <person name="Wu H.C."/>
            <person name="Kim C.J."/>
            <person name="Nguyen M."/>
            <person name="Pham P.K."/>
            <person name="Cheuk R.F."/>
            <person name="Karlin-Newmann G."/>
            <person name="Liu S.X."/>
            <person name="Lam B."/>
            <person name="Sakano H."/>
            <person name="Wu T."/>
            <person name="Yu G."/>
            <person name="Miranda M."/>
            <person name="Quach H.L."/>
            <person name="Tripp M."/>
            <person name="Chang C.H."/>
            <person name="Lee J.M."/>
            <person name="Toriumi M.J."/>
            <person name="Chan M.M."/>
            <person name="Tang C.C."/>
            <person name="Onodera C.S."/>
            <person name="Deng J.M."/>
            <person name="Akiyama K."/>
            <person name="Ansari Y."/>
            <person name="Arakawa T."/>
            <person name="Banh J."/>
            <person name="Banno F."/>
            <person name="Bowser L."/>
            <person name="Brooks S.Y."/>
            <person name="Carninci P."/>
            <person name="Chao Q."/>
            <person name="Choy N."/>
            <person name="Enju A."/>
            <person name="Goldsmith A.D."/>
            <person name="Gurjal M."/>
            <person name="Hansen N.F."/>
            <person name="Hayashizaki Y."/>
            <person name="Johnson-Hopson C."/>
            <person name="Hsuan V.W."/>
            <person name="Iida K."/>
            <person name="Karnes M."/>
            <person name="Khan S."/>
            <person name="Koesema E."/>
            <person name="Ishida J."/>
            <person name="Jiang P.X."/>
            <person name="Jones T."/>
            <person name="Kawai J."/>
            <person name="Kamiya A."/>
            <person name="Meyers C."/>
            <person name="Nakajima M."/>
            <person name="Narusaka M."/>
            <person name="Seki M."/>
            <person name="Sakurai T."/>
            <person name="Satou M."/>
            <person name="Tamse R."/>
            <person name="Vaysberg M."/>
            <person name="Wallender E.K."/>
            <person name="Wong C."/>
            <person name="Yamamura Y."/>
            <person name="Yuan S."/>
            <person name="Shinozaki K."/>
            <person name="Davis R.W."/>
            <person name="Theologis A."/>
            <person name="Ecker J.R."/>
        </authorList>
    </citation>
    <scope>NUCLEOTIDE SEQUENCE [LARGE SCALE MRNA]</scope>
    <source>
        <strain>cv. Columbia</strain>
    </source>
</reference>
<reference key="5">
    <citation type="submission" date="2006-07" db="EMBL/GenBank/DDBJ databases">
        <title>Large-scale analysis of RIKEN Arabidopsis full-length (RAFL) cDNAs.</title>
        <authorList>
            <person name="Totoki Y."/>
            <person name="Seki M."/>
            <person name="Ishida J."/>
            <person name="Nakajima M."/>
            <person name="Enju A."/>
            <person name="Kamiya A."/>
            <person name="Narusaka M."/>
            <person name="Shin-i T."/>
            <person name="Nakagawa M."/>
            <person name="Sakamoto N."/>
            <person name="Oishi K."/>
            <person name="Kohara Y."/>
            <person name="Kobayashi M."/>
            <person name="Toyoda A."/>
            <person name="Sakaki Y."/>
            <person name="Sakurai T."/>
            <person name="Iida K."/>
            <person name="Akiyama K."/>
            <person name="Satou M."/>
            <person name="Toyoda T."/>
            <person name="Konagaya A."/>
            <person name="Carninci P."/>
            <person name="Kawai J."/>
            <person name="Hayashizaki Y."/>
            <person name="Shinozaki K."/>
        </authorList>
    </citation>
    <scope>NUCLEOTIDE SEQUENCE [LARGE SCALE MRNA]</scope>
    <source>
        <strain>cv. Columbia</strain>
    </source>
</reference>
<reference key="6">
    <citation type="journal article" date="2002" name="Plant Physiol.">
        <title>The Arabidopsis xylem peptidase XCP1 is a tracheary element vacuolar protein that may be a papain ortholog.</title>
        <authorList>
            <person name="Funk V."/>
            <person name="Kositsup B."/>
            <person name="Zhao C."/>
            <person name="Beers E.P."/>
        </authorList>
    </citation>
    <scope>TISSUE SPECIFICITY</scope>
</reference>
<reference key="7">
    <citation type="journal article" date="2008" name="Plant J.">
        <title>Cysteine proteases XCP1 and XCP2 aid micro-autolysis within the intact central vacuole during xylogenesis in Arabidopsis roots.</title>
        <authorList>
            <person name="Avci U."/>
            <person name="Petzold H.E."/>
            <person name="Ismail I.O."/>
            <person name="Beers E.P."/>
            <person name="Haigler C.H."/>
        </authorList>
    </citation>
    <scope>FUNCTION</scope>
</reference>
<reference key="8">
    <citation type="journal article" date="2014" name="Plant J.">
        <title>PIRIN2 stabilizes cysteine protease XCP2 and increases susceptibility to the vascular pathogen Ralstonia solanacearum in Arabidopsis.</title>
        <authorList>
            <person name="Zhang B."/>
            <person name="Tremousaygue D."/>
            <person name="Denance N."/>
            <person name="van Esse H.P."/>
            <person name="Hoerger A.C."/>
            <person name="Dabos P."/>
            <person name="Goffner D."/>
            <person name="Thomma B.P."/>
            <person name="van der Hoorn R.A."/>
            <person name="Tuominen H."/>
        </authorList>
    </citation>
    <scope>FUNCTION</scope>
    <scope>INTERACTION WITH PRN2</scope>
    <scope>DISRUPTION PHENOTYPE</scope>
</reference>
<organism>
    <name type="scientific">Arabidopsis thaliana</name>
    <name type="common">Mouse-ear cress</name>
    <dbReference type="NCBI Taxonomy" id="3702"/>
    <lineage>
        <taxon>Eukaryota</taxon>
        <taxon>Viridiplantae</taxon>
        <taxon>Streptophyta</taxon>
        <taxon>Embryophyta</taxon>
        <taxon>Tracheophyta</taxon>
        <taxon>Spermatophyta</taxon>
        <taxon>Magnoliopsida</taxon>
        <taxon>eudicotyledons</taxon>
        <taxon>Gunneridae</taxon>
        <taxon>Pentapetalae</taxon>
        <taxon>rosids</taxon>
        <taxon>malvids</taxon>
        <taxon>Brassicales</taxon>
        <taxon>Brassicaceae</taxon>
        <taxon>Camelineae</taxon>
        <taxon>Arabidopsis</taxon>
    </lineage>
</organism>
<evidence type="ECO:0000250" key="1">
    <source>
        <dbReference type="UniProtKB" id="O65493"/>
    </source>
</evidence>
<evidence type="ECO:0000250" key="2">
    <source>
        <dbReference type="UniProtKB" id="P00785"/>
    </source>
</evidence>
<evidence type="ECO:0000250" key="3">
    <source>
        <dbReference type="UniProtKB" id="P80884"/>
    </source>
</evidence>
<evidence type="ECO:0000250" key="4">
    <source>
        <dbReference type="UniProtKB" id="P84346"/>
    </source>
</evidence>
<evidence type="ECO:0000255" key="5"/>
<evidence type="ECO:0000255" key="6">
    <source>
        <dbReference type="PROSITE-ProRule" id="PRU00498"/>
    </source>
</evidence>
<evidence type="ECO:0000255" key="7">
    <source>
        <dbReference type="PROSITE-ProRule" id="PRU10088"/>
    </source>
</evidence>
<evidence type="ECO:0000255" key="8">
    <source>
        <dbReference type="PROSITE-ProRule" id="PRU10089"/>
    </source>
</evidence>
<evidence type="ECO:0000255" key="9">
    <source>
        <dbReference type="PROSITE-ProRule" id="PRU10090"/>
    </source>
</evidence>
<evidence type="ECO:0000269" key="10">
    <source>
    </source>
</evidence>
<evidence type="ECO:0000269" key="11">
    <source>
    </source>
</evidence>
<evidence type="ECO:0000269" key="12">
    <source>
    </source>
</evidence>
<evidence type="ECO:0000269" key="13">
    <source>
    </source>
</evidence>
<evidence type="ECO:0000303" key="14">
    <source>
    </source>
</evidence>
<evidence type="ECO:0000305" key="15"/>
<evidence type="ECO:0000312" key="16">
    <source>
        <dbReference type="Araport" id="AT1G20850"/>
    </source>
</evidence>
<evidence type="ECO:0000312" key="17">
    <source>
        <dbReference type="EMBL" id="AAD30607.1"/>
    </source>
</evidence>
<evidence type="ECO:0000312" key="18">
    <source>
        <dbReference type="EMBL" id="AAF80626.1"/>
    </source>
</evidence>
<sequence>MALSSPSRILCFALALSAASLSLSFASSHDYSIVGYSPEDLESHDKLIELFENWISNFEKAYETVEEKFLRFEVFKDNLKHIDETNKKGKSYWLGLNEFADLSHEEFKKMYLGLKTDIVRRDEERSYAEFAYRDVEAVPKSVDWRKKGAVAEVKNQGSCGSCWAFSTVAAVEGINKIVTGNLTTLSEQELIDCDTTYNNGCNGGLMDYAFEYIVKNGGLRKEEDYPYSMEEGTCEMQKDESETVTINGHQDVPTNDEKSLLKALAHQPLSVAIDASGREFQFYSGGVFDGRCGVDLDHGVAAVGYGSSKGSDYIIVKNSWGPKWGEKGYIRLKRNTGKPEGLCGINKMASFPTKTK</sequence>
<accession>Q9LM66</accession>
<accession>Q0WT15</accession>
<accession>Q9SYQ2</accession>
<keyword id="KW-1003">Cell membrane</keyword>
<keyword id="KW-1015">Disulfide bond</keyword>
<keyword id="KW-0325">Glycoprotein</keyword>
<keyword id="KW-0378">Hydrolase</keyword>
<keyword id="KW-0472">Membrane</keyword>
<keyword id="KW-0611">Plant defense</keyword>
<keyword id="KW-0645">Protease</keyword>
<keyword id="KW-1185">Reference proteome</keyword>
<keyword id="KW-0732">Signal</keyword>
<keyword id="KW-0788">Thiol protease</keyword>
<keyword id="KW-0926">Vacuole</keyword>
<keyword id="KW-0865">Zymogen</keyword>
<dbReference type="EC" id="3.4.22.-" evidence="3"/>
<dbReference type="EMBL" id="AF191028">
    <property type="protein sequence ID" value="AAF25832.1"/>
    <property type="molecule type" value="mRNA"/>
</dbReference>
<dbReference type="EMBL" id="AC007369">
    <property type="protein sequence ID" value="AAD30607.1"/>
    <property type="molecule type" value="Genomic_DNA"/>
</dbReference>
<dbReference type="EMBL" id="AC069251">
    <property type="protein sequence ID" value="AAF80626.1"/>
    <property type="molecule type" value="Genomic_DNA"/>
</dbReference>
<dbReference type="EMBL" id="CP002684">
    <property type="protein sequence ID" value="AEE30031.1"/>
    <property type="molecule type" value="Genomic_DNA"/>
</dbReference>
<dbReference type="EMBL" id="BT004822">
    <property type="protein sequence ID" value="AAO44088.1"/>
    <property type="molecule type" value="mRNA"/>
</dbReference>
<dbReference type="EMBL" id="AK227749">
    <property type="protein sequence ID" value="BAE99733.1"/>
    <property type="molecule type" value="mRNA"/>
</dbReference>
<dbReference type="PIR" id="A86341">
    <property type="entry name" value="A86341"/>
</dbReference>
<dbReference type="RefSeq" id="NP_564126.1">
    <property type="nucleotide sequence ID" value="NM_101938.5"/>
</dbReference>
<dbReference type="SMR" id="Q9LM66"/>
<dbReference type="BioGRID" id="23916">
    <property type="interactions" value="2"/>
</dbReference>
<dbReference type="FunCoup" id="Q9LM66">
    <property type="interactions" value="564"/>
</dbReference>
<dbReference type="IntAct" id="Q9LM66">
    <property type="interactions" value="2"/>
</dbReference>
<dbReference type="STRING" id="3702.Q9LM66"/>
<dbReference type="MEROPS" id="C01.065"/>
<dbReference type="GlyCosmos" id="Q9LM66">
    <property type="glycosylation" value="1 site, No reported glycans"/>
</dbReference>
<dbReference type="GlyGen" id="Q9LM66">
    <property type="glycosylation" value="1 site"/>
</dbReference>
<dbReference type="PaxDb" id="3702-AT1G20850.1"/>
<dbReference type="ProteomicsDB" id="242775"/>
<dbReference type="EnsemblPlants" id="AT1G20850.1">
    <property type="protein sequence ID" value="AT1G20850.1"/>
    <property type="gene ID" value="AT1G20850"/>
</dbReference>
<dbReference type="GeneID" id="838677"/>
<dbReference type="Gramene" id="AT1G20850.1">
    <property type="protein sequence ID" value="AT1G20850.1"/>
    <property type="gene ID" value="AT1G20850"/>
</dbReference>
<dbReference type="KEGG" id="ath:AT1G20850"/>
<dbReference type="Araport" id="AT1G20850"/>
<dbReference type="TAIR" id="AT1G20850">
    <property type="gene designation" value="XCP2"/>
</dbReference>
<dbReference type="eggNOG" id="KOG1543">
    <property type="taxonomic scope" value="Eukaryota"/>
</dbReference>
<dbReference type="HOGENOM" id="CLU_012184_1_0_1"/>
<dbReference type="InParanoid" id="Q9LM66"/>
<dbReference type="OMA" id="HNGEYSE"/>
<dbReference type="OrthoDB" id="10253408at2759"/>
<dbReference type="PhylomeDB" id="Q9LM66"/>
<dbReference type="PRO" id="PR:Q9LM66"/>
<dbReference type="Proteomes" id="UP000006548">
    <property type="component" value="Chromosome 1"/>
</dbReference>
<dbReference type="ExpressionAtlas" id="Q9LM66">
    <property type="expression patterns" value="baseline and differential"/>
</dbReference>
<dbReference type="GO" id="GO:0005886">
    <property type="term" value="C:plasma membrane"/>
    <property type="evidence" value="ECO:0007669"/>
    <property type="project" value="UniProtKB-SubCell"/>
</dbReference>
<dbReference type="GO" id="GO:0005773">
    <property type="term" value="C:vacuole"/>
    <property type="evidence" value="ECO:0007669"/>
    <property type="project" value="UniProtKB-SubCell"/>
</dbReference>
<dbReference type="GO" id="GO:0008234">
    <property type="term" value="F:cysteine-type peptidase activity"/>
    <property type="evidence" value="ECO:0007669"/>
    <property type="project" value="UniProtKB-KW"/>
</dbReference>
<dbReference type="GO" id="GO:0042742">
    <property type="term" value="P:defense response to bacterium"/>
    <property type="evidence" value="ECO:0000315"/>
    <property type="project" value="UniProtKB"/>
</dbReference>
<dbReference type="GO" id="GO:0010623">
    <property type="term" value="P:programmed cell death involved in cell development"/>
    <property type="evidence" value="ECO:0000315"/>
    <property type="project" value="TAIR"/>
</dbReference>
<dbReference type="GO" id="GO:0006508">
    <property type="term" value="P:proteolysis"/>
    <property type="evidence" value="ECO:0007669"/>
    <property type="project" value="UniProtKB-KW"/>
</dbReference>
<dbReference type="CDD" id="cd02248">
    <property type="entry name" value="Peptidase_C1A"/>
    <property type="match status" value="1"/>
</dbReference>
<dbReference type="FunFam" id="3.90.70.10:FF:000055">
    <property type="entry name" value="cysteine protease XCP2"/>
    <property type="match status" value="1"/>
</dbReference>
<dbReference type="Gene3D" id="3.90.70.10">
    <property type="entry name" value="Cysteine proteinases"/>
    <property type="match status" value="1"/>
</dbReference>
<dbReference type="InterPro" id="IPR038765">
    <property type="entry name" value="Papain-like_cys_pep_sf"/>
</dbReference>
<dbReference type="InterPro" id="IPR025661">
    <property type="entry name" value="Pept_asp_AS"/>
</dbReference>
<dbReference type="InterPro" id="IPR000169">
    <property type="entry name" value="Pept_cys_AS"/>
</dbReference>
<dbReference type="InterPro" id="IPR025660">
    <property type="entry name" value="Pept_his_AS"/>
</dbReference>
<dbReference type="InterPro" id="IPR013128">
    <property type="entry name" value="Peptidase_C1A"/>
</dbReference>
<dbReference type="InterPro" id="IPR000668">
    <property type="entry name" value="Peptidase_C1A_C"/>
</dbReference>
<dbReference type="InterPro" id="IPR039417">
    <property type="entry name" value="Peptidase_C1A_papain-like"/>
</dbReference>
<dbReference type="InterPro" id="IPR013201">
    <property type="entry name" value="Prot_inhib_I29"/>
</dbReference>
<dbReference type="PANTHER" id="PTHR12411">
    <property type="entry name" value="CYSTEINE PROTEASE FAMILY C1-RELATED"/>
    <property type="match status" value="1"/>
</dbReference>
<dbReference type="Pfam" id="PF08246">
    <property type="entry name" value="Inhibitor_I29"/>
    <property type="match status" value="1"/>
</dbReference>
<dbReference type="Pfam" id="PF00112">
    <property type="entry name" value="Peptidase_C1"/>
    <property type="match status" value="1"/>
</dbReference>
<dbReference type="PRINTS" id="PR00705">
    <property type="entry name" value="PAPAIN"/>
</dbReference>
<dbReference type="SMART" id="SM00848">
    <property type="entry name" value="Inhibitor_I29"/>
    <property type="match status" value="1"/>
</dbReference>
<dbReference type="SMART" id="SM00645">
    <property type="entry name" value="Pept_C1"/>
    <property type="match status" value="1"/>
</dbReference>
<dbReference type="SUPFAM" id="SSF54001">
    <property type="entry name" value="Cysteine proteinases"/>
    <property type="match status" value="1"/>
</dbReference>
<dbReference type="PROSITE" id="PS00640">
    <property type="entry name" value="THIOL_PROTEASE_ASN"/>
    <property type="match status" value="1"/>
</dbReference>
<dbReference type="PROSITE" id="PS00139">
    <property type="entry name" value="THIOL_PROTEASE_CYS"/>
    <property type="match status" value="1"/>
</dbReference>
<dbReference type="PROSITE" id="PS00639">
    <property type="entry name" value="THIOL_PROTEASE_HIS"/>
    <property type="match status" value="1"/>
</dbReference>